<dbReference type="EC" id="4.1.1.37" evidence="1"/>
<dbReference type="EMBL" id="CU928161">
    <property type="protein sequence ID" value="CAR05627.1"/>
    <property type="molecule type" value="Genomic_DNA"/>
</dbReference>
<dbReference type="RefSeq" id="WP_000137653.1">
    <property type="nucleotide sequence ID" value="NC_011742.1"/>
</dbReference>
<dbReference type="SMR" id="B7MIY3"/>
<dbReference type="KEGG" id="ecz:ECS88_4458"/>
<dbReference type="HOGENOM" id="CLU_040933_0_0_6"/>
<dbReference type="UniPathway" id="UPA00251">
    <property type="reaction ID" value="UER00321"/>
</dbReference>
<dbReference type="Proteomes" id="UP000000747">
    <property type="component" value="Chromosome"/>
</dbReference>
<dbReference type="GO" id="GO:0005829">
    <property type="term" value="C:cytosol"/>
    <property type="evidence" value="ECO:0007669"/>
    <property type="project" value="TreeGrafter"/>
</dbReference>
<dbReference type="GO" id="GO:0004853">
    <property type="term" value="F:uroporphyrinogen decarboxylase activity"/>
    <property type="evidence" value="ECO:0007669"/>
    <property type="project" value="UniProtKB-UniRule"/>
</dbReference>
<dbReference type="GO" id="GO:0019353">
    <property type="term" value="P:protoporphyrinogen IX biosynthetic process from glutamate"/>
    <property type="evidence" value="ECO:0007669"/>
    <property type="project" value="TreeGrafter"/>
</dbReference>
<dbReference type="CDD" id="cd00717">
    <property type="entry name" value="URO-D"/>
    <property type="match status" value="1"/>
</dbReference>
<dbReference type="FunFam" id="3.20.20.210:FF:000001">
    <property type="entry name" value="Uroporphyrinogen decarboxylase"/>
    <property type="match status" value="1"/>
</dbReference>
<dbReference type="Gene3D" id="3.20.20.210">
    <property type="match status" value="1"/>
</dbReference>
<dbReference type="HAMAP" id="MF_00218">
    <property type="entry name" value="URO_D"/>
    <property type="match status" value="1"/>
</dbReference>
<dbReference type="InterPro" id="IPR038071">
    <property type="entry name" value="UROD/MetE-like_sf"/>
</dbReference>
<dbReference type="InterPro" id="IPR006361">
    <property type="entry name" value="Uroporphyrinogen_deCO2ase_HemE"/>
</dbReference>
<dbReference type="InterPro" id="IPR000257">
    <property type="entry name" value="Uroporphyrinogen_deCOase"/>
</dbReference>
<dbReference type="NCBIfam" id="TIGR01464">
    <property type="entry name" value="hemE"/>
    <property type="match status" value="1"/>
</dbReference>
<dbReference type="PANTHER" id="PTHR21091">
    <property type="entry name" value="METHYLTETRAHYDROFOLATE:HOMOCYSTEINE METHYLTRANSFERASE RELATED"/>
    <property type="match status" value="1"/>
</dbReference>
<dbReference type="PANTHER" id="PTHR21091:SF169">
    <property type="entry name" value="UROPORPHYRINOGEN DECARBOXYLASE"/>
    <property type="match status" value="1"/>
</dbReference>
<dbReference type="Pfam" id="PF01208">
    <property type="entry name" value="URO-D"/>
    <property type="match status" value="1"/>
</dbReference>
<dbReference type="SUPFAM" id="SSF51726">
    <property type="entry name" value="UROD/MetE-like"/>
    <property type="match status" value="1"/>
</dbReference>
<dbReference type="PROSITE" id="PS00906">
    <property type="entry name" value="UROD_1"/>
    <property type="match status" value="1"/>
</dbReference>
<dbReference type="PROSITE" id="PS00907">
    <property type="entry name" value="UROD_2"/>
    <property type="match status" value="1"/>
</dbReference>
<proteinExistence type="inferred from homology"/>
<protein>
    <recommendedName>
        <fullName evidence="1">Uroporphyrinogen decarboxylase</fullName>
        <shortName evidence="1">UPD</shortName>
        <shortName evidence="1">URO-D</shortName>
        <ecNumber evidence="1">4.1.1.37</ecNumber>
    </recommendedName>
</protein>
<organism>
    <name type="scientific">Escherichia coli O45:K1 (strain S88 / ExPEC)</name>
    <dbReference type="NCBI Taxonomy" id="585035"/>
    <lineage>
        <taxon>Bacteria</taxon>
        <taxon>Pseudomonadati</taxon>
        <taxon>Pseudomonadota</taxon>
        <taxon>Gammaproteobacteria</taxon>
        <taxon>Enterobacterales</taxon>
        <taxon>Enterobacteriaceae</taxon>
        <taxon>Escherichia</taxon>
    </lineage>
</organism>
<feature type="chain" id="PRO_1000197521" description="Uroporphyrinogen decarboxylase">
    <location>
        <begin position="1"/>
        <end position="354"/>
    </location>
</feature>
<feature type="binding site" evidence="1">
    <location>
        <begin position="27"/>
        <end position="31"/>
    </location>
    <ligand>
        <name>substrate</name>
    </ligand>
</feature>
<feature type="binding site" evidence="1">
    <location>
        <position position="77"/>
    </location>
    <ligand>
        <name>substrate</name>
    </ligand>
</feature>
<feature type="binding site" evidence="1">
    <location>
        <position position="154"/>
    </location>
    <ligand>
        <name>substrate</name>
    </ligand>
</feature>
<feature type="binding site" evidence="1">
    <location>
        <position position="209"/>
    </location>
    <ligand>
        <name>substrate</name>
    </ligand>
</feature>
<feature type="binding site" evidence="1">
    <location>
        <position position="327"/>
    </location>
    <ligand>
        <name>substrate</name>
    </ligand>
</feature>
<feature type="site" description="Transition state stabilizer" evidence="1">
    <location>
        <position position="77"/>
    </location>
</feature>
<keyword id="KW-0963">Cytoplasm</keyword>
<keyword id="KW-0210">Decarboxylase</keyword>
<keyword id="KW-0456">Lyase</keyword>
<keyword id="KW-0627">Porphyrin biosynthesis</keyword>
<keyword id="KW-1185">Reference proteome</keyword>
<accession>B7MIY3</accession>
<gene>
    <name evidence="1" type="primary">hemE</name>
    <name type="ordered locus">ECS88_4458</name>
</gene>
<name>DCUP_ECO45</name>
<sequence length="354" mass="39234">MTELKNDRYLRALLRQPVDVTPVWMMRQAGRYLPEYKATRAQAGDFMSLCKNAELACEVTLQPLRRYPLDAAILFSDILTVPDAMGLGLYFEAGEGPRFTSPVTCKADVDKLPIPDPEDELGYVMNAVRTIRRELKGEVPLIGFSGSPWTLATYMVEGGSSKAFTVIKKMMYADPQALHALLDKLAKSVTLYLNAQIKAGAQAVMIFDTWGGVLTGRDYQQFSLYYMHKIVDGLLRENDGRRVPVTLFTKGGGQWLEAMAETGCDALGLDWTTDIADARRRVGNKVALQGNMDPSMLYAPPARIEEEVASILAGFGHGEGHVFNLGHGIHQDVPPEHAGVFVEAVHRLSEQYHR</sequence>
<reference key="1">
    <citation type="journal article" date="2009" name="PLoS Genet.">
        <title>Organised genome dynamics in the Escherichia coli species results in highly diverse adaptive paths.</title>
        <authorList>
            <person name="Touchon M."/>
            <person name="Hoede C."/>
            <person name="Tenaillon O."/>
            <person name="Barbe V."/>
            <person name="Baeriswyl S."/>
            <person name="Bidet P."/>
            <person name="Bingen E."/>
            <person name="Bonacorsi S."/>
            <person name="Bouchier C."/>
            <person name="Bouvet O."/>
            <person name="Calteau A."/>
            <person name="Chiapello H."/>
            <person name="Clermont O."/>
            <person name="Cruveiller S."/>
            <person name="Danchin A."/>
            <person name="Diard M."/>
            <person name="Dossat C."/>
            <person name="Karoui M.E."/>
            <person name="Frapy E."/>
            <person name="Garry L."/>
            <person name="Ghigo J.M."/>
            <person name="Gilles A.M."/>
            <person name="Johnson J."/>
            <person name="Le Bouguenec C."/>
            <person name="Lescat M."/>
            <person name="Mangenot S."/>
            <person name="Martinez-Jehanne V."/>
            <person name="Matic I."/>
            <person name="Nassif X."/>
            <person name="Oztas S."/>
            <person name="Petit M.A."/>
            <person name="Pichon C."/>
            <person name="Rouy Z."/>
            <person name="Ruf C.S."/>
            <person name="Schneider D."/>
            <person name="Tourret J."/>
            <person name="Vacherie B."/>
            <person name="Vallenet D."/>
            <person name="Medigue C."/>
            <person name="Rocha E.P.C."/>
            <person name="Denamur E."/>
        </authorList>
    </citation>
    <scope>NUCLEOTIDE SEQUENCE [LARGE SCALE GENOMIC DNA]</scope>
    <source>
        <strain>S88 / ExPEC</strain>
    </source>
</reference>
<evidence type="ECO:0000255" key="1">
    <source>
        <dbReference type="HAMAP-Rule" id="MF_00218"/>
    </source>
</evidence>
<comment type="function">
    <text evidence="1">Catalyzes the decarboxylation of four acetate groups of uroporphyrinogen-III to yield coproporphyrinogen-III.</text>
</comment>
<comment type="catalytic activity">
    <reaction evidence="1">
        <text>uroporphyrinogen III + 4 H(+) = coproporphyrinogen III + 4 CO2</text>
        <dbReference type="Rhea" id="RHEA:19865"/>
        <dbReference type="ChEBI" id="CHEBI:15378"/>
        <dbReference type="ChEBI" id="CHEBI:16526"/>
        <dbReference type="ChEBI" id="CHEBI:57308"/>
        <dbReference type="ChEBI" id="CHEBI:57309"/>
        <dbReference type="EC" id="4.1.1.37"/>
    </reaction>
</comment>
<comment type="pathway">
    <text evidence="1">Porphyrin-containing compound metabolism; protoporphyrin-IX biosynthesis; coproporphyrinogen-III from 5-aminolevulinate: step 4/4.</text>
</comment>
<comment type="subunit">
    <text evidence="1">Homodimer.</text>
</comment>
<comment type="subcellular location">
    <subcellularLocation>
        <location evidence="1">Cytoplasm</location>
    </subcellularLocation>
</comment>
<comment type="similarity">
    <text evidence="1">Belongs to the uroporphyrinogen decarboxylase family.</text>
</comment>